<name>IF6_NEUCR</name>
<proteinExistence type="inferred from homology"/>
<reference key="1">
    <citation type="journal article" date="2003" name="Nature">
        <title>The genome sequence of the filamentous fungus Neurospora crassa.</title>
        <authorList>
            <person name="Galagan J.E."/>
            <person name="Calvo S.E."/>
            <person name="Borkovich K.A."/>
            <person name="Selker E.U."/>
            <person name="Read N.D."/>
            <person name="Jaffe D.B."/>
            <person name="FitzHugh W."/>
            <person name="Ma L.-J."/>
            <person name="Smirnov S."/>
            <person name="Purcell S."/>
            <person name="Rehman B."/>
            <person name="Elkins T."/>
            <person name="Engels R."/>
            <person name="Wang S."/>
            <person name="Nielsen C.B."/>
            <person name="Butler J."/>
            <person name="Endrizzi M."/>
            <person name="Qui D."/>
            <person name="Ianakiev P."/>
            <person name="Bell-Pedersen D."/>
            <person name="Nelson M.A."/>
            <person name="Werner-Washburne M."/>
            <person name="Selitrennikoff C.P."/>
            <person name="Kinsey J.A."/>
            <person name="Braun E.L."/>
            <person name="Zelter A."/>
            <person name="Schulte U."/>
            <person name="Kothe G.O."/>
            <person name="Jedd G."/>
            <person name="Mewes H.-W."/>
            <person name="Staben C."/>
            <person name="Marcotte E."/>
            <person name="Greenberg D."/>
            <person name="Roy A."/>
            <person name="Foley K."/>
            <person name="Naylor J."/>
            <person name="Stange-Thomann N."/>
            <person name="Barrett R."/>
            <person name="Gnerre S."/>
            <person name="Kamal M."/>
            <person name="Kamvysselis M."/>
            <person name="Mauceli E.W."/>
            <person name="Bielke C."/>
            <person name="Rudd S."/>
            <person name="Frishman D."/>
            <person name="Krystofova S."/>
            <person name="Rasmussen C."/>
            <person name="Metzenberg R.L."/>
            <person name="Perkins D.D."/>
            <person name="Kroken S."/>
            <person name="Cogoni C."/>
            <person name="Macino G."/>
            <person name="Catcheside D.E.A."/>
            <person name="Li W."/>
            <person name="Pratt R.J."/>
            <person name="Osmani S.A."/>
            <person name="DeSouza C.P.C."/>
            <person name="Glass N.L."/>
            <person name="Orbach M.J."/>
            <person name="Berglund J.A."/>
            <person name="Voelker R."/>
            <person name="Yarden O."/>
            <person name="Plamann M."/>
            <person name="Seiler S."/>
            <person name="Dunlap J.C."/>
            <person name="Radford A."/>
            <person name="Aramayo R."/>
            <person name="Natvig D.O."/>
            <person name="Alex L.A."/>
            <person name="Mannhaupt G."/>
            <person name="Ebbole D.J."/>
            <person name="Freitag M."/>
            <person name="Paulsen I."/>
            <person name="Sachs M.S."/>
            <person name="Lander E.S."/>
            <person name="Nusbaum C."/>
            <person name="Birren B.W."/>
        </authorList>
    </citation>
    <scope>NUCLEOTIDE SEQUENCE [LARGE SCALE GENOMIC DNA]</scope>
    <source>
        <strain>ATCC 24698 / 74-OR23-1A / CBS 708.71 / DSM 1257 / FGSC 987</strain>
    </source>
</reference>
<sequence length="246" mass="26514">MAVRAQFENSNEVGVFSTLTNSYALVAVGASENFYSVFEAELQDVIPICRTTIAGTRIIGRLTAGNRKGLLVPTTTSDQELQHLRNSLPDDVRIQRIEERLSALGNVIVCNDHTALIHPDLERETEEIIADVLGVEVFRQTIADNVLVGSYMALSNQGGLVHPKTSIQDQDELSSLLQVPLVAGSVNRGSNVIGGGMVVNDWMAVTGLDTTAPELSVIESVFRLGEGAAPGQINSSLKDTMVESFY</sequence>
<accession>Q7S2W6</accession>
<organism>
    <name type="scientific">Neurospora crassa (strain ATCC 24698 / 74-OR23-1A / CBS 708.71 / DSM 1257 / FGSC 987)</name>
    <dbReference type="NCBI Taxonomy" id="367110"/>
    <lineage>
        <taxon>Eukaryota</taxon>
        <taxon>Fungi</taxon>
        <taxon>Dikarya</taxon>
        <taxon>Ascomycota</taxon>
        <taxon>Pezizomycotina</taxon>
        <taxon>Sordariomycetes</taxon>
        <taxon>Sordariomycetidae</taxon>
        <taxon>Sordariales</taxon>
        <taxon>Sordariaceae</taxon>
        <taxon>Neurospora</taxon>
    </lineage>
</organism>
<comment type="function">
    <text evidence="1">Binds to the 60S ribosomal subunit and prevents its association with the 40S ribosomal subunit to form the 80S initiation complex in the cytoplasm. Is also involved in ribosome biogenesis. Associates with pre-60S subunits in the nucleus and is involved in its nuclear export.</text>
</comment>
<comment type="subunit">
    <text evidence="1">Monomer. Associates with the 60S ribosomal subunit.</text>
</comment>
<comment type="subcellular location">
    <subcellularLocation>
        <location evidence="1">Cytoplasm</location>
    </subcellularLocation>
    <subcellularLocation>
        <location evidence="1">Nucleus</location>
        <location evidence="1">Nucleolus</location>
    </subcellularLocation>
    <text evidence="1">Shuttles between cytoplasm and nucleus/nucleolus.</text>
</comment>
<comment type="PTM">
    <text evidence="1">Phosphorylation at Ser-174 and Ser-175 promotes nuclear export.</text>
</comment>
<comment type="similarity">
    <text evidence="1">Belongs to the eIF-6 family.</text>
</comment>
<keyword id="KW-0963">Cytoplasm</keyword>
<keyword id="KW-0396">Initiation factor</keyword>
<keyword id="KW-0539">Nucleus</keyword>
<keyword id="KW-0597">Phosphoprotein</keyword>
<keyword id="KW-0648">Protein biosynthesis</keyword>
<keyword id="KW-1185">Reference proteome</keyword>
<keyword id="KW-0690">Ribosome biogenesis</keyword>
<protein>
    <recommendedName>
        <fullName evidence="1">Eukaryotic translation initiation factor 6</fullName>
        <shortName evidence="1">eIF-6</shortName>
    </recommendedName>
</protein>
<feature type="chain" id="PRO_0000402109" description="Eukaryotic translation initiation factor 6">
    <location>
        <begin position="1"/>
        <end position="246"/>
    </location>
</feature>
<feature type="modified residue" description="Phosphoserine; by CK1" evidence="1">
    <location>
        <position position="174"/>
    </location>
</feature>
<feature type="modified residue" description="Phosphoserine; by CK1" evidence="1">
    <location>
        <position position="175"/>
    </location>
</feature>
<gene>
    <name type="primary">tif-6</name>
    <name type="synonym">tif6</name>
    <name type="ORF">NCU09004</name>
</gene>
<dbReference type="EMBL" id="CM002238">
    <property type="protein sequence ID" value="EAA29796.1"/>
    <property type="molecule type" value="Genomic_DNA"/>
</dbReference>
<dbReference type="RefSeq" id="XP_959032.1">
    <property type="nucleotide sequence ID" value="XM_953939.3"/>
</dbReference>
<dbReference type="SMR" id="Q7S2W6"/>
<dbReference type="FunCoup" id="Q7S2W6">
    <property type="interactions" value="1060"/>
</dbReference>
<dbReference type="STRING" id="367110.Q7S2W6"/>
<dbReference type="PaxDb" id="5141-EFNCRP00000008941"/>
<dbReference type="EnsemblFungi" id="EAA29796">
    <property type="protein sequence ID" value="EAA29796"/>
    <property type="gene ID" value="NCU09004"/>
</dbReference>
<dbReference type="GeneID" id="3875154"/>
<dbReference type="KEGG" id="ncr:NCU09004"/>
<dbReference type="VEuPathDB" id="FungiDB:NCU09004"/>
<dbReference type="HOGENOM" id="CLU_071894_0_0_1"/>
<dbReference type="InParanoid" id="Q7S2W6"/>
<dbReference type="OMA" id="WCAFCGM"/>
<dbReference type="OrthoDB" id="4155914at2759"/>
<dbReference type="Proteomes" id="UP000001805">
    <property type="component" value="Chromosome 3, Linkage Group III"/>
</dbReference>
<dbReference type="GO" id="GO:0005829">
    <property type="term" value="C:cytosol"/>
    <property type="evidence" value="ECO:0000318"/>
    <property type="project" value="GO_Central"/>
</dbReference>
<dbReference type="GO" id="GO:0005730">
    <property type="term" value="C:nucleolus"/>
    <property type="evidence" value="ECO:0007669"/>
    <property type="project" value="UniProtKB-SubCell"/>
</dbReference>
<dbReference type="GO" id="GO:0005634">
    <property type="term" value="C:nucleus"/>
    <property type="evidence" value="ECO:0000318"/>
    <property type="project" value="GO_Central"/>
</dbReference>
<dbReference type="GO" id="GO:0030687">
    <property type="term" value="C:preribosome, large subunit precursor"/>
    <property type="evidence" value="ECO:0007669"/>
    <property type="project" value="EnsemblFungi"/>
</dbReference>
<dbReference type="GO" id="GO:0043023">
    <property type="term" value="F:ribosomal large subunit binding"/>
    <property type="evidence" value="ECO:0000318"/>
    <property type="project" value="GO_Central"/>
</dbReference>
<dbReference type="GO" id="GO:0003743">
    <property type="term" value="F:translation initiation factor activity"/>
    <property type="evidence" value="ECO:0007669"/>
    <property type="project" value="UniProtKB-UniRule"/>
</dbReference>
<dbReference type="GO" id="GO:1902626">
    <property type="term" value="P:assembly of large subunit precursor of preribosome"/>
    <property type="evidence" value="ECO:0000318"/>
    <property type="project" value="GO_Central"/>
</dbReference>
<dbReference type="GO" id="GO:0042256">
    <property type="term" value="P:cytosolic ribosome assembly"/>
    <property type="evidence" value="ECO:0007669"/>
    <property type="project" value="UniProtKB-UniRule"/>
</dbReference>
<dbReference type="GO" id="GO:0000460">
    <property type="term" value="P:maturation of 5.8S rRNA"/>
    <property type="evidence" value="ECO:0000318"/>
    <property type="project" value="GO_Central"/>
</dbReference>
<dbReference type="GO" id="GO:0000466">
    <property type="term" value="P:maturation of 5.8S rRNA from tricistronic rRNA transcript (SSU-rRNA, 5.8S rRNA, LSU-rRNA)"/>
    <property type="evidence" value="ECO:0007669"/>
    <property type="project" value="EnsemblFungi"/>
</dbReference>
<dbReference type="GO" id="GO:0000470">
    <property type="term" value="P:maturation of LSU-rRNA"/>
    <property type="evidence" value="ECO:0000318"/>
    <property type="project" value="GO_Central"/>
</dbReference>
<dbReference type="GO" id="GO:0000463">
    <property type="term" value="P:maturation of LSU-rRNA from tricistronic rRNA transcript (SSU-rRNA, 5.8S rRNA, LSU-rRNA)"/>
    <property type="evidence" value="ECO:0007669"/>
    <property type="project" value="EnsemblFungi"/>
</dbReference>
<dbReference type="GO" id="GO:0000054">
    <property type="term" value="P:ribosomal subunit export from nucleus"/>
    <property type="evidence" value="ECO:0000318"/>
    <property type="project" value="GO_Central"/>
</dbReference>
<dbReference type="CDD" id="cd00527">
    <property type="entry name" value="IF6"/>
    <property type="match status" value="1"/>
</dbReference>
<dbReference type="FunFam" id="3.75.10.10:FF:000001">
    <property type="entry name" value="Eukaryotic translation initiation factor 6"/>
    <property type="match status" value="1"/>
</dbReference>
<dbReference type="Gene3D" id="3.75.10.10">
    <property type="entry name" value="L-arginine/glycine Amidinotransferase, Chain A"/>
    <property type="match status" value="1"/>
</dbReference>
<dbReference type="HAMAP" id="MF_00032">
    <property type="entry name" value="eIF_6"/>
    <property type="match status" value="1"/>
</dbReference>
<dbReference type="InterPro" id="IPR002769">
    <property type="entry name" value="eIF6"/>
</dbReference>
<dbReference type="NCBIfam" id="TIGR00323">
    <property type="entry name" value="eIF-6"/>
    <property type="match status" value="1"/>
</dbReference>
<dbReference type="PANTHER" id="PTHR10784">
    <property type="entry name" value="TRANSLATION INITIATION FACTOR 6"/>
    <property type="match status" value="1"/>
</dbReference>
<dbReference type="Pfam" id="PF01912">
    <property type="entry name" value="eIF-6"/>
    <property type="match status" value="1"/>
</dbReference>
<dbReference type="PIRSF" id="PIRSF006413">
    <property type="entry name" value="IF-6"/>
    <property type="match status" value="1"/>
</dbReference>
<dbReference type="SMART" id="SM00654">
    <property type="entry name" value="eIF6"/>
    <property type="match status" value="1"/>
</dbReference>
<dbReference type="SUPFAM" id="SSF55909">
    <property type="entry name" value="Pentein"/>
    <property type="match status" value="1"/>
</dbReference>
<evidence type="ECO:0000255" key="1">
    <source>
        <dbReference type="HAMAP-Rule" id="MF_03132"/>
    </source>
</evidence>